<organism>
    <name type="scientific">Campylobacter jejuni subsp. jejuni serotype O:2 (strain ATCC 700819 / NCTC 11168)</name>
    <dbReference type="NCBI Taxonomy" id="192222"/>
    <lineage>
        <taxon>Bacteria</taxon>
        <taxon>Pseudomonadati</taxon>
        <taxon>Campylobacterota</taxon>
        <taxon>Epsilonproteobacteria</taxon>
        <taxon>Campylobacterales</taxon>
        <taxon>Campylobacteraceae</taxon>
        <taxon>Campylobacter</taxon>
    </lineage>
</organism>
<reference key="1">
    <citation type="journal article" date="2000" name="Nature">
        <title>The genome sequence of the food-borne pathogen Campylobacter jejuni reveals hypervariable sequences.</title>
        <authorList>
            <person name="Parkhill J."/>
            <person name="Wren B.W."/>
            <person name="Mungall K.L."/>
            <person name="Ketley J.M."/>
            <person name="Churcher C.M."/>
            <person name="Basham D."/>
            <person name="Chillingworth T."/>
            <person name="Davies R.M."/>
            <person name="Feltwell T."/>
            <person name="Holroyd S."/>
            <person name="Jagels K."/>
            <person name="Karlyshev A.V."/>
            <person name="Moule S."/>
            <person name="Pallen M.J."/>
            <person name="Penn C.W."/>
            <person name="Quail M.A."/>
            <person name="Rajandream M.A."/>
            <person name="Rutherford K.M."/>
            <person name="van Vliet A.H.M."/>
            <person name="Whitehead S."/>
            <person name="Barrell B.G."/>
        </authorList>
    </citation>
    <scope>NUCLEOTIDE SEQUENCE [LARGE SCALE GENOMIC DNA]</scope>
    <source>
        <strain>ATCC 700819 / NCTC 11168</strain>
    </source>
</reference>
<keyword id="KW-0456">Lyase</keyword>
<keyword id="KW-0501">Molybdenum cofactor biosynthesis</keyword>
<keyword id="KW-1185">Reference proteome</keyword>
<gene>
    <name evidence="1" type="primary">moaC</name>
    <name type="ordered locus">Cj0252</name>
</gene>
<name>MOAC_CAMJE</name>
<protein>
    <recommendedName>
        <fullName evidence="1">Cyclic pyranopterin monophosphate synthase</fullName>
        <ecNumber evidence="1">4.6.1.17</ecNumber>
    </recommendedName>
    <alternativeName>
        <fullName evidence="1">Molybdenum cofactor biosynthesis protein C</fullName>
    </alternativeName>
</protein>
<evidence type="ECO:0000255" key="1">
    <source>
        <dbReference type="HAMAP-Rule" id="MF_01224"/>
    </source>
</evidence>
<accession>Q9PIP3</accession>
<accession>Q0PBQ3</accession>
<proteinExistence type="inferred from homology"/>
<dbReference type="EC" id="4.6.1.17" evidence="1"/>
<dbReference type="EMBL" id="AL111168">
    <property type="protein sequence ID" value="CAL34406.1"/>
    <property type="molecule type" value="Genomic_DNA"/>
</dbReference>
<dbReference type="PIR" id="C81443">
    <property type="entry name" value="C81443"/>
</dbReference>
<dbReference type="RefSeq" id="WP_002851725.1">
    <property type="nucleotide sequence ID" value="NZ_SZUC01000006.1"/>
</dbReference>
<dbReference type="RefSeq" id="YP_002343694.1">
    <property type="nucleotide sequence ID" value="NC_002163.1"/>
</dbReference>
<dbReference type="SMR" id="Q9PIP3"/>
<dbReference type="IntAct" id="Q9PIP3">
    <property type="interactions" value="41"/>
</dbReference>
<dbReference type="STRING" id="192222.Cj0252"/>
<dbReference type="PaxDb" id="192222-Cj0252"/>
<dbReference type="EnsemblBacteria" id="CAL34406">
    <property type="protein sequence ID" value="CAL34406"/>
    <property type="gene ID" value="Cj0252"/>
</dbReference>
<dbReference type="GeneID" id="904578"/>
<dbReference type="KEGG" id="cje:Cj0252"/>
<dbReference type="PATRIC" id="fig|192222.6.peg.246"/>
<dbReference type="eggNOG" id="COG0315">
    <property type="taxonomic scope" value="Bacteria"/>
</dbReference>
<dbReference type="HOGENOM" id="CLU_074693_1_1_7"/>
<dbReference type="OrthoDB" id="9794429at2"/>
<dbReference type="UniPathway" id="UPA00344"/>
<dbReference type="Proteomes" id="UP000000799">
    <property type="component" value="Chromosome"/>
</dbReference>
<dbReference type="GO" id="GO:0061799">
    <property type="term" value="F:cyclic pyranopterin monophosphate synthase activity"/>
    <property type="evidence" value="ECO:0007669"/>
    <property type="project" value="UniProtKB-UniRule"/>
</dbReference>
<dbReference type="GO" id="GO:0061798">
    <property type="term" value="F:GTP 3',8'-cyclase activity"/>
    <property type="evidence" value="ECO:0007669"/>
    <property type="project" value="TreeGrafter"/>
</dbReference>
<dbReference type="GO" id="GO:0006777">
    <property type="term" value="P:Mo-molybdopterin cofactor biosynthetic process"/>
    <property type="evidence" value="ECO:0007669"/>
    <property type="project" value="UniProtKB-UniRule"/>
</dbReference>
<dbReference type="CDD" id="cd01420">
    <property type="entry name" value="MoaC_PE"/>
    <property type="match status" value="1"/>
</dbReference>
<dbReference type="Gene3D" id="3.30.70.640">
    <property type="entry name" value="Molybdopterin cofactor biosynthesis C (MoaC) domain"/>
    <property type="match status" value="1"/>
</dbReference>
<dbReference type="HAMAP" id="MF_01224_B">
    <property type="entry name" value="MoaC_B"/>
    <property type="match status" value="1"/>
</dbReference>
<dbReference type="InterPro" id="IPR023045">
    <property type="entry name" value="MoaC"/>
</dbReference>
<dbReference type="InterPro" id="IPR047594">
    <property type="entry name" value="MoaC_bact/euk"/>
</dbReference>
<dbReference type="InterPro" id="IPR036522">
    <property type="entry name" value="MoaC_sf"/>
</dbReference>
<dbReference type="InterPro" id="IPR050105">
    <property type="entry name" value="MoCo_biosynth_MoaA/MoaC"/>
</dbReference>
<dbReference type="InterPro" id="IPR002820">
    <property type="entry name" value="Mopterin_CF_biosynth-C_dom"/>
</dbReference>
<dbReference type="NCBIfam" id="TIGR00581">
    <property type="entry name" value="moaC"/>
    <property type="match status" value="1"/>
</dbReference>
<dbReference type="NCBIfam" id="NF006870">
    <property type="entry name" value="PRK09364.1"/>
    <property type="match status" value="1"/>
</dbReference>
<dbReference type="PANTHER" id="PTHR22960:SF0">
    <property type="entry name" value="MOLYBDENUM COFACTOR BIOSYNTHESIS PROTEIN 1"/>
    <property type="match status" value="1"/>
</dbReference>
<dbReference type="PANTHER" id="PTHR22960">
    <property type="entry name" value="MOLYBDOPTERIN COFACTOR SYNTHESIS PROTEIN A"/>
    <property type="match status" value="1"/>
</dbReference>
<dbReference type="Pfam" id="PF01967">
    <property type="entry name" value="MoaC"/>
    <property type="match status" value="1"/>
</dbReference>
<dbReference type="SUPFAM" id="SSF55040">
    <property type="entry name" value="Molybdenum cofactor biosynthesis protein C, MoaC"/>
    <property type="match status" value="1"/>
</dbReference>
<comment type="function">
    <text evidence="1">Catalyzes the conversion of (8S)-3',8-cyclo-7,8-dihydroguanosine 5'-triphosphate to cyclic pyranopterin monophosphate (cPMP).</text>
</comment>
<comment type="catalytic activity">
    <reaction evidence="1">
        <text>(8S)-3',8-cyclo-7,8-dihydroguanosine 5'-triphosphate = cyclic pyranopterin phosphate + diphosphate</text>
        <dbReference type="Rhea" id="RHEA:49580"/>
        <dbReference type="ChEBI" id="CHEBI:33019"/>
        <dbReference type="ChEBI" id="CHEBI:59648"/>
        <dbReference type="ChEBI" id="CHEBI:131766"/>
        <dbReference type="EC" id="4.6.1.17"/>
    </reaction>
</comment>
<comment type="pathway">
    <text evidence="1">Cofactor biosynthesis; molybdopterin biosynthesis.</text>
</comment>
<comment type="subunit">
    <text evidence="1">Homohexamer; trimer of dimers.</text>
</comment>
<comment type="similarity">
    <text evidence="1">Belongs to the MoaC family.</text>
</comment>
<feature type="chain" id="PRO_0000097791" description="Cyclic pyranopterin monophosphate synthase">
    <location>
        <begin position="1"/>
        <end position="157"/>
    </location>
</feature>
<feature type="active site" evidence="1">
    <location>
        <position position="127"/>
    </location>
</feature>
<feature type="binding site" evidence="1">
    <location>
        <begin position="74"/>
        <end position="76"/>
    </location>
    <ligand>
        <name>substrate</name>
    </ligand>
</feature>
<feature type="binding site" evidence="1">
    <location>
        <begin position="112"/>
        <end position="113"/>
    </location>
    <ligand>
        <name>substrate</name>
    </ligand>
</feature>
<sequence length="157" mass="17172">MKLSHLDEKNHPKMVDVSDKNITLRIATASGIIYMSQEAFDVIKNNTAKKGPVLQTAIVAAIMGVKKTSEIIPMCHPLMLSKVETNIVEFVKECAFKLIVTVKCEGKTGVEMEALSGVSIGLLTIYDMIKAIDKSMRITDIVLESKEGGKSGKFVRS</sequence>